<evidence type="ECO:0000250" key="1"/>
<evidence type="ECO:0000250" key="2">
    <source>
        <dbReference type="UniProtKB" id="P09913"/>
    </source>
</evidence>
<evidence type="ECO:0000256" key="3">
    <source>
        <dbReference type="SAM" id="MobiDB-lite"/>
    </source>
</evidence>
<evidence type="ECO:0000269" key="4">
    <source>
    </source>
</evidence>
<evidence type="ECO:0000305" key="5"/>
<keyword id="KW-0007">Acetylation</keyword>
<keyword id="KW-0051">Antiviral defense</keyword>
<keyword id="KW-0053">Apoptosis</keyword>
<keyword id="KW-0963">Cytoplasm</keyword>
<keyword id="KW-0256">Endoplasmic reticulum</keyword>
<keyword id="KW-0391">Immunity</keyword>
<keyword id="KW-0399">Innate immunity</keyword>
<keyword id="KW-0677">Repeat</keyword>
<keyword id="KW-0694">RNA-binding</keyword>
<keyword id="KW-0802">TPR repeat</keyword>
<organism>
    <name type="scientific">Cricetulus griseus</name>
    <name type="common">Chinese hamster</name>
    <name type="synonym">Cricetulus barabensis griseus</name>
    <dbReference type="NCBI Taxonomy" id="10029"/>
    <lineage>
        <taxon>Eukaryota</taxon>
        <taxon>Metazoa</taxon>
        <taxon>Chordata</taxon>
        <taxon>Craniata</taxon>
        <taxon>Vertebrata</taxon>
        <taxon>Euteleostomi</taxon>
        <taxon>Mammalia</taxon>
        <taxon>Eutheria</taxon>
        <taxon>Euarchontoglires</taxon>
        <taxon>Glires</taxon>
        <taxon>Rodentia</taxon>
        <taxon>Myomorpha</taxon>
        <taxon>Muroidea</taxon>
        <taxon>Cricetidae</taxon>
        <taxon>Cricetinae</taxon>
        <taxon>Cricetulus</taxon>
    </lineage>
</organism>
<protein>
    <recommendedName>
        <fullName>Interferon-induced protein with tetratricopeptide repeats 2</fullName>
        <shortName>IFIT-2</shortName>
    </recommendedName>
    <alternativeName>
        <fullName>CL-54 K</fullName>
    </alternativeName>
    <alternativeName>
        <fullName>Interferon-induced 54 kDa protein</fullName>
        <shortName>IFI-54K</shortName>
    </alternativeName>
</protein>
<gene>
    <name type="primary">IFIT2</name>
    <name type="synonym">IFI54</name>
</gene>
<feature type="initiator methionine" description="Removed" evidence="2">
    <location>
        <position position="1"/>
    </location>
</feature>
<feature type="chain" id="PRO_0000106346" description="Interferon-induced protein with tetratricopeptide repeats 2">
    <location>
        <begin position="2"/>
        <end position="468"/>
    </location>
</feature>
<feature type="repeat" description="TPR 1">
    <location>
        <begin position="51"/>
        <end position="89"/>
    </location>
</feature>
<feature type="repeat" description="TPR 2">
    <location>
        <begin position="90"/>
        <end position="135"/>
    </location>
</feature>
<feature type="repeat" description="TPR 3">
    <location>
        <begin position="136"/>
        <end position="171"/>
    </location>
</feature>
<feature type="repeat" description="TPR 4">
    <location>
        <begin position="172"/>
        <end position="208"/>
    </location>
</feature>
<feature type="repeat" description="TPR 5">
    <location>
        <begin position="242"/>
        <end position="275"/>
    </location>
</feature>
<feature type="repeat" description="TPR 6">
    <location>
        <begin position="276"/>
        <end position="328"/>
    </location>
</feature>
<feature type="repeat" description="TPR 7">
    <location>
        <begin position="329"/>
        <end position="359"/>
    </location>
</feature>
<feature type="repeat" description="TPR 8">
    <location>
        <begin position="360"/>
        <end position="398"/>
    </location>
</feature>
<feature type="repeat" description="TPR 9">
    <location>
        <begin position="399"/>
        <end position="441"/>
    </location>
</feature>
<feature type="region of interest" description="Disordered" evidence="3">
    <location>
        <begin position="441"/>
        <end position="468"/>
    </location>
</feature>
<feature type="compositionally biased region" description="Basic and acidic residues" evidence="3">
    <location>
        <begin position="445"/>
        <end position="454"/>
    </location>
</feature>
<feature type="modified residue" description="N-acetylserine" evidence="2">
    <location>
        <position position="2"/>
    </location>
</feature>
<name>IFIT2_CRIGR</name>
<comment type="function">
    <text evidence="1">IFN-induced antiviral protein which inhibits expression of viral messenger RNAs lacking 2'-O-methylation of the 5' cap. The ribose 2'-O-methylation would provide a molecular signature to distinguish between self and non-self mRNAs by the host during viral infection. Viruses evolved several ways to evade this restriction system such as encoding their own 2'-O-methylase for their mRNAs or by stealing host cap containing the 2'-O-methylation (cap snatching mechanism). Binds AU-rich viral RNAs, with or without 5' triphosphorylation, RNA-binding is required for antiviral activity. Can promote apoptosis (By similarity).</text>
</comment>
<comment type="subunit">
    <text evidence="1">Domain-swapped homodimer. Component of an interferon-dependent multiprotein complex, at least composed of IFIT1, IFIT2 and IFIT3. Interacts with IFIT1 and IFIT3 (By similarity). Interacts with STING1/MITA and disrupts its interaction with MAVS or TBK1 (By similarity). Interacts with EIF3E and EIF3C (By similarity).</text>
</comment>
<comment type="subcellular location">
    <subcellularLocation>
        <location evidence="1">Cytoplasm</location>
    </subcellularLocation>
    <subcellularLocation>
        <location evidence="1">Endoplasmic reticulum</location>
    </subcellularLocation>
</comment>
<comment type="induction">
    <text evidence="4">By interferons.</text>
</comment>
<comment type="domain">
    <text evidence="1">The C-terminal part folds into a super-helical structure and has an extensively positively-charged nucleotide-binding channel on its inner surface.</text>
</comment>
<comment type="similarity">
    <text evidence="5">Belongs to the IFIT family.</text>
</comment>
<proteinExistence type="evidence at transcript level"/>
<accession>Q60462</accession>
<reference key="1">
    <citation type="journal article" date="1994" name="Eur. J. Biochem.">
        <title>The interferon-stimulated gene 54 K promoter contains two adjacent functional interferon-stimulated response elements of different strength, which act synergistically for maximal interferon-alpha inducibility.</title>
        <authorList>
            <person name="Bluyssen J.A.R."/>
            <person name="Vlietstra R.J."/>
            <person name="van der Made A."/>
            <person name="Trapman J."/>
        </authorList>
    </citation>
    <scope>NUCLEOTIDE SEQUENCE [GENOMIC DNA]</scope>
    <scope>INDUCTION</scope>
    <source>
        <tissue>Ovary</tissue>
    </source>
</reference>
<sequence length="468" mass="55046">MSTTTKKSLESKLQQLKCHFTWNLMAGDESLDEFEDKVFNKDEFQKRECKATMCNILAFVKHRRGQNASALKELEKAEQFIQQQHPDHVEIRNIVTWGNYAWVYYHMGQLEKAQAYLDKVRQVCEKFSSPYRIESPELDCEEGWARLKCTRNQNERVKVCFEKALEKDPKNPEFTSGWAISNYRLDFWPAQQNAVDSLKQAIRMSPNSPYVKVLLALKLEMNQENQGKELVEEALREAPGETDVLRSAARFYYKTHDKDRAIQLLSQALELLPNNAYVYYYIGCFYRSKVLQIDSRRETSQNENREQLLKQAIYYLKKAEETKEMIKDSCSYLAHLYVLAEQYKEADYYFQKGFKKELTPGLKQLLHLRYGNFQFFQMKCEDKAIHQYLEGVKIRQKTKPKEKMTNKLRFIAERRRSQNGFDSKALHILAFLQELNKESQQAAKVSERGQDSERPVFSPSLHEGGNEQ</sequence>
<dbReference type="EMBL" id="X77259">
    <property type="protein sequence ID" value="CAA54477.1"/>
    <property type="molecule type" value="Genomic_DNA"/>
</dbReference>
<dbReference type="SMR" id="Q60462"/>
<dbReference type="PaxDb" id="10029-XP_007625629.1"/>
<dbReference type="eggNOG" id="KOG1124">
    <property type="taxonomic scope" value="Eukaryota"/>
</dbReference>
<dbReference type="Proteomes" id="UP000694386">
    <property type="component" value="Unplaced"/>
</dbReference>
<dbReference type="Proteomes" id="UP001108280">
    <property type="component" value="Unplaced"/>
</dbReference>
<dbReference type="GO" id="GO:0005737">
    <property type="term" value="C:cytoplasm"/>
    <property type="evidence" value="ECO:0000250"/>
    <property type="project" value="UniProtKB"/>
</dbReference>
<dbReference type="GO" id="GO:0005829">
    <property type="term" value="C:cytosol"/>
    <property type="evidence" value="ECO:0007669"/>
    <property type="project" value="TreeGrafter"/>
</dbReference>
<dbReference type="GO" id="GO:0005783">
    <property type="term" value="C:endoplasmic reticulum"/>
    <property type="evidence" value="ECO:0000250"/>
    <property type="project" value="UniProtKB"/>
</dbReference>
<dbReference type="GO" id="GO:0003723">
    <property type="term" value="F:RNA binding"/>
    <property type="evidence" value="ECO:0007669"/>
    <property type="project" value="UniProtKB-KW"/>
</dbReference>
<dbReference type="GO" id="GO:0006915">
    <property type="term" value="P:apoptotic process"/>
    <property type="evidence" value="ECO:0007669"/>
    <property type="project" value="UniProtKB-KW"/>
</dbReference>
<dbReference type="GO" id="GO:0051607">
    <property type="term" value="P:defense response to virus"/>
    <property type="evidence" value="ECO:0007669"/>
    <property type="project" value="UniProtKB-KW"/>
</dbReference>
<dbReference type="GO" id="GO:0045087">
    <property type="term" value="P:innate immune response"/>
    <property type="evidence" value="ECO:0007669"/>
    <property type="project" value="UniProtKB-KW"/>
</dbReference>
<dbReference type="GO" id="GO:0043065">
    <property type="term" value="P:positive regulation of apoptotic process"/>
    <property type="evidence" value="ECO:0000250"/>
    <property type="project" value="UniProtKB"/>
</dbReference>
<dbReference type="GO" id="GO:0009615">
    <property type="term" value="P:response to virus"/>
    <property type="evidence" value="ECO:0000250"/>
    <property type="project" value="UniProtKB"/>
</dbReference>
<dbReference type="FunFam" id="1.25.40.10:FF:000036">
    <property type="entry name" value="interferon-induced protein with tetratricopeptide repeats 5"/>
    <property type="match status" value="1"/>
</dbReference>
<dbReference type="Gene3D" id="1.25.40.10">
    <property type="entry name" value="Tetratricopeptide repeat domain"/>
    <property type="match status" value="3"/>
</dbReference>
<dbReference type="InterPro" id="IPR011990">
    <property type="entry name" value="TPR-like_helical_dom_sf"/>
</dbReference>
<dbReference type="InterPro" id="IPR019734">
    <property type="entry name" value="TPR_rpt"/>
</dbReference>
<dbReference type="PANTHER" id="PTHR10271">
    <property type="entry name" value="INTERFERON-INDUCED PROTEIN WITH TETRATRICOPEPTIDE REPEATS"/>
    <property type="match status" value="1"/>
</dbReference>
<dbReference type="PANTHER" id="PTHR10271:SF4">
    <property type="entry name" value="INTERFERON-INDUCED PROTEIN WITH TETRATRICOPEPTIDE REPEATS 2"/>
    <property type="match status" value="1"/>
</dbReference>
<dbReference type="Pfam" id="PF13424">
    <property type="entry name" value="TPR_12"/>
    <property type="match status" value="1"/>
</dbReference>
<dbReference type="Pfam" id="PF14559">
    <property type="entry name" value="TPR_19"/>
    <property type="match status" value="1"/>
</dbReference>
<dbReference type="SMART" id="SM00028">
    <property type="entry name" value="TPR"/>
    <property type="match status" value="4"/>
</dbReference>
<dbReference type="SUPFAM" id="SSF48452">
    <property type="entry name" value="TPR-like"/>
    <property type="match status" value="2"/>
</dbReference>
<dbReference type="PROSITE" id="PS50005">
    <property type="entry name" value="TPR"/>
    <property type="match status" value="2"/>
</dbReference>
<dbReference type="PROSITE" id="PS50293">
    <property type="entry name" value="TPR_REGION"/>
    <property type="match status" value="1"/>
</dbReference>